<protein>
    <recommendedName>
        <fullName evidence="11">Peptide YY</fullName>
        <shortName evidence="11">PYY</shortName>
    </recommendedName>
    <alternativeName>
        <fullName evidence="2">PYY-I</fullName>
    </alternativeName>
    <alternativeName>
        <fullName>Peptide tyrosine tyrosine</fullName>
    </alternativeName>
    <component>
        <recommendedName>
            <fullName evidence="11">Peptide YY(3-36)</fullName>
        </recommendedName>
        <alternativeName>
            <fullName evidence="2">PYY-II</fullName>
        </alternativeName>
    </component>
</protein>
<gene>
    <name type="primary">PYY</name>
</gene>
<accession>P10082</accession>
<accession>Q5U5Q6</accession>
<accession>Q6FGH8</accession>
<feature type="signal peptide" evidence="6 7">
    <location>
        <begin position="1"/>
        <end position="28"/>
    </location>
</feature>
<feature type="peptide" id="PRO_0000025384" description="Peptide YY">
    <location>
        <begin position="29"/>
        <end position="64"/>
    </location>
</feature>
<feature type="peptide" id="PRO_0000025385" description="Peptide YY(3-36)">
    <location>
        <begin position="31"/>
        <end position="64"/>
    </location>
</feature>
<feature type="propeptide" id="PRO_0000025386">
    <location>
        <begin position="68"/>
        <end position="97"/>
    </location>
</feature>
<feature type="region of interest" description="Disordered" evidence="3">
    <location>
        <begin position="65"/>
        <end position="97"/>
    </location>
</feature>
<feature type="compositionally biased region" description="Basic and acidic residues" evidence="3">
    <location>
        <begin position="82"/>
        <end position="97"/>
    </location>
</feature>
<feature type="site" description="Cleavage; by FAP" evidence="5">
    <location>
        <begin position="30"/>
        <end position="31"/>
    </location>
</feature>
<feature type="modified residue" description="Phosphoserine" evidence="1">
    <location>
        <position position="41"/>
    </location>
</feature>
<feature type="modified residue" description="Tyrosine amide" evidence="6 7">
    <location>
        <position position="64"/>
    </location>
</feature>
<feature type="splice variant" id="VSP_005081" description="In isoform 2." evidence="12 13">
    <location>
        <begin position="91"/>
        <end position="97"/>
    </location>
</feature>
<feature type="sequence variant" id="VAR_047407" description="In dbSNP:rs229969." evidence="4 6 7 8 9 10">
    <original>R</original>
    <variation>G</variation>
    <location>
        <position position="37"/>
    </location>
</feature>
<feature type="sequence variant" id="VAR_006382" description="In dbSNP:rs1058046." evidence="4 8 10">
    <original>T</original>
    <variation>R</variation>
    <location>
        <position position="72"/>
    </location>
</feature>
<feature type="sequence variant" id="VAR_047408" description="In dbSNP:rs465407.">
    <original>D</original>
    <variation>H</variation>
    <location>
        <position position="95"/>
    </location>
</feature>
<feature type="strand" evidence="15">
    <location>
        <begin position="31"/>
        <end position="33"/>
    </location>
</feature>
<feature type="helix" evidence="16">
    <location>
        <begin position="42"/>
        <end position="61"/>
    </location>
</feature>
<evidence type="ECO:0000250" key="1">
    <source>
        <dbReference type="UniProtKB" id="P68005"/>
    </source>
</evidence>
<evidence type="ECO:0000250" key="2">
    <source>
        <dbReference type="UniProtKB" id="Q9TR93"/>
    </source>
</evidence>
<evidence type="ECO:0000256" key="3">
    <source>
        <dbReference type="SAM" id="MobiDB-lite"/>
    </source>
</evidence>
<evidence type="ECO:0000269" key="4">
    <source>
    </source>
</evidence>
<evidence type="ECO:0000269" key="5">
    <source>
    </source>
</evidence>
<evidence type="ECO:0000269" key="6">
    <source>
    </source>
</evidence>
<evidence type="ECO:0000269" key="7">
    <source>
    </source>
</evidence>
<evidence type="ECO:0000269" key="8">
    <source>
    </source>
</evidence>
<evidence type="ECO:0000269" key="9">
    <source ref="2"/>
</evidence>
<evidence type="ECO:0000269" key="10">
    <source ref="3"/>
</evidence>
<evidence type="ECO:0000303" key="11">
    <source>
    </source>
</evidence>
<evidence type="ECO:0000303" key="12">
    <source>
    </source>
</evidence>
<evidence type="ECO:0000303" key="13">
    <source ref="3"/>
</evidence>
<evidence type="ECO:0000305" key="14"/>
<evidence type="ECO:0007829" key="15">
    <source>
        <dbReference type="PDB" id="2DEZ"/>
    </source>
</evidence>
<evidence type="ECO:0007829" key="16">
    <source>
        <dbReference type="PDB" id="7RT9"/>
    </source>
</evidence>
<dbReference type="EMBL" id="D13897">
    <property type="protein sequence ID" value="BAA02997.1"/>
    <property type="molecule type" value="Genomic_DNA"/>
</dbReference>
<dbReference type="EMBL" id="D13897">
    <property type="protein sequence ID" value="BAA02998.1"/>
    <property type="molecule type" value="Genomic_DNA"/>
</dbReference>
<dbReference type="EMBL" id="D13899">
    <property type="protein sequence ID" value="BAA03000.1"/>
    <property type="molecule type" value="mRNA"/>
</dbReference>
<dbReference type="EMBL" id="D13902">
    <property type="protein sequence ID" value="BAA03002.1"/>
    <property type="molecule type" value="mRNA"/>
</dbReference>
<dbReference type="EMBL" id="L25648">
    <property type="protein sequence ID" value="AAA36433.1"/>
    <property type="molecule type" value="Genomic_DNA"/>
</dbReference>
<dbReference type="EMBL" id="CR542129">
    <property type="protein sequence ID" value="CAG46926.1"/>
    <property type="molecule type" value="mRNA"/>
</dbReference>
<dbReference type="EMBL" id="AC007993">
    <property type="status" value="NOT_ANNOTATED_CDS"/>
    <property type="molecule type" value="Genomic_DNA"/>
</dbReference>
<dbReference type="EMBL" id="BC041057">
    <property type="protein sequence ID" value="AAH41057.1"/>
    <property type="molecule type" value="mRNA"/>
</dbReference>
<dbReference type="CCDS" id="CCDS32662.1">
    <molecule id="P10082-1"/>
</dbReference>
<dbReference type="CCDS" id="CCDS92333.1">
    <molecule id="P10082-2"/>
</dbReference>
<dbReference type="PIR" id="A31358">
    <property type="entry name" value="A31358"/>
</dbReference>
<dbReference type="PIR" id="S33795">
    <property type="entry name" value="S33795"/>
</dbReference>
<dbReference type="PIR" id="S34568">
    <property type="entry name" value="S34568"/>
</dbReference>
<dbReference type="PIR" id="S34569">
    <property type="entry name" value="S34569"/>
</dbReference>
<dbReference type="RefSeq" id="NP_001380957.1">
    <molecule id="P10082-1"/>
    <property type="nucleotide sequence ID" value="NM_001394028.1"/>
</dbReference>
<dbReference type="RefSeq" id="NP_001380958.1">
    <molecule id="P10082-2"/>
    <property type="nucleotide sequence ID" value="NM_001394029.1"/>
</dbReference>
<dbReference type="RefSeq" id="NP_004151.4">
    <molecule id="P10082-1"/>
    <property type="nucleotide sequence ID" value="NM_004160.6"/>
</dbReference>
<dbReference type="RefSeq" id="XP_011523337.1">
    <property type="nucleotide sequence ID" value="XM_011525035.1"/>
</dbReference>
<dbReference type="PDB" id="2DEZ">
    <property type="method" value="NMR"/>
    <property type="chains" value="A=29-64"/>
</dbReference>
<dbReference type="PDB" id="2DF0">
    <property type="method" value="NMR"/>
    <property type="chains" value="A=31-64"/>
</dbReference>
<dbReference type="PDB" id="2L60">
    <property type="method" value="NMR"/>
    <property type="chains" value="A=41-64"/>
</dbReference>
<dbReference type="PDB" id="2NA5">
    <property type="method" value="NMR"/>
    <property type="chains" value="A=31-63"/>
</dbReference>
<dbReference type="PDB" id="7RT9">
    <property type="method" value="X-ray"/>
    <property type="resolution" value="1.90 A"/>
    <property type="chains" value="Y/Z=29-64"/>
</dbReference>
<dbReference type="PDB" id="7YON">
    <property type="method" value="EM"/>
    <property type="resolution" value="2.95 A"/>
    <property type="chains" value="L=31-64"/>
</dbReference>
<dbReference type="PDBsum" id="2DEZ"/>
<dbReference type="PDBsum" id="2DF0"/>
<dbReference type="PDBsum" id="2L60"/>
<dbReference type="PDBsum" id="2NA5"/>
<dbReference type="PDBsum" id="7RT9"/>
<dbReference type="PDBsum" id="7YON"/>
<dbReference type="BMRB" id="P10082"/>
<dbReference type="EMDB" id="EMD-33984"/>
<dbReference type="SMR" id="P10082"/>
<dbReference type="BioGRID" id="111670">
    <property type="interactions" value="31"/>
</dbReference>
<dbReference type="FunCoup" id="P10082">
    <property type="interactions" value="512"/>
</dbReference>
<dbReference type="IntAct" id="P10082">
    <property type="interactions" value="9"/>
</dbReference>
<dbReference type="MINT" id="P10082"/>
<dbReference type="STRING" id="9606.ENSP00000353198"/>
<dbReference type="BioMuta" id="PYY"/>
<dbReference type="DMDM" id="317373516"/>
<dbReference type="MassIVE" id="P10082"/>
<dbReference type="PaxDb" id="9606-ENSP00000353198"/>
<dbReference type="PeptideAtlas" id="P10082"/>
<dbReference type="ProteomicsDB" id="52563">
    <molecule id="P10082-1"/>
</dbReference>
<dbReference type="ProteomicsDB" id="52564">
    <molecule id="P10082-2"/>
</dbReference>
<dbReference type="Antibodypedia" id="3390">
    <property type="antibodies" value="458 antibodies from 31 providers"/>
</dbReference>
<dbReference type="DNASU" id="5697"/>
<dbReference type="Ensembl" id="ENST00000360085.6">
    <molecule id="P10082-1"/>
    <property type="protein sequence ID" value="ENSP00000353198.1"/>
    <property type="gene ID" value="ENSG00000131096.11"/>
</dbReference>
<dbReference type="Ensembl" id="ENST00000592796.2">
    <molecule id="P10082-2"/>
    <property type="protein sequence ID" value="ENSP00000467310.1"/>
    <property type="gene ID" value="ENSG00000131096.11"/>
</dbReference>
<dbReference type="Ensembl" id="ENST00000692052.1">
    <molecule id="P10082-1"/>
    <property type="protein sequence ID" value="ENSP00000509262.1"/>
    <property type="gene ID" value="ENSG00000131096.11"/>
</dbReference>
<dbReference type="GeneID" id="5697"/>
<dbReference type="KEGG" id="hsa:5697"/>
<dbReference type="MANE-Select" id="ENST00000692052.1">
    <property type="protein sequence ID" value="ENSP00000509262.1"/>
    <property type="RefSeq nucleotide sequence ID" value="NM_001394028.1"/>
    <property type="RefSeq protein sequence ID" value="NP_001380957.1"/>
</dbReference>
<dbReference type="UCSC" id="uc002ieq.4">
    <molecule id="P10082-1"/>
    <property type="organism name" value="human"/>
</dbReference>
<dbReference type="AGR" id="HGNC:9748"/>
<dbReference type="CTD" id="5697"/>
<dbReference type="DisGeNET" id="5697"/>
<dbReference type="GeneCards" id="PYY"/>
<dbReference type="HGNC" id="HGNC:9748">
    <property type="gene designation" value="PYY"/>
</dbReference>
<dbReference type="HPA" id="ENSG00000131096">
    <property type="expression patterns" value="Tissue enriched (intestine)"/>
</dbReference>
<dbReference type="MalaCards" id="PYY"/>
<dbReference type="MIM" id="600781">
    <property type="type" value="gene"/>
</dbReference>
<dbReference type="neXtProt" id="NX_P10082"/>
<dbReference type="OpenTargets" id="ENSG00000131096"/>
<dbReference type="PharmGKB" id="PA34090"/>
<dbReference type="VEuPathDB" id="HostDB:ENSG00000131096"/>
<dbReference type="eggNOG" id="ENOG502S267">
    <property type="taxonomic scope" value="Eukaryota"/>
</dbReference>
<dbReference type="GeneTree" id="ENSGT00940000160643"/>
<dbReference type="HOGENOM" id="CLU_162379_1_0_1"/>
<dbReference type="InParanoid" id="P10082"/>
<dbReference type="OMA" id="DSNRDQR"/>
<dbReference type="OrthoDB" id="9852947at2759"/>
<dbReference type="PAN-GO" id="P10082">
    <property type="GO annotations" value="5 GO annotations based on evolutionary models"/>
</dbReference>
<dbReference type="PhylomeDB" id="P10082"/>
<dbReference type="TreeFam" id="TF332778"/>
<dbReference type="PathwayCommons" id="P10082"/>
<dbReference type="Reactome" id="R-HSA-375276">
    <property type="pathway name" value="Peptide ligand-binding receptors"/>
</dbReference>
<dbReference type="Reactome" id="R-HSA-418594">
    <property type="pathway name" value="G alpha (i) signalling events"/>
</dbReference>
<dbReference type="SignaLink" id="P10082"/>
<dbReference type="SIGNOR" id="P10082"/>
<dbReference type="BioGRID-ORCS" id="5697">
    <property type="hits" value="6 hits in 1140 CRISPR screens"/>
</dbReference>
<dbReference type="ChiTaRS" id="PYY">
    <property type="organism name" value="human"/>
</dbReference>
<dbReference type="EvolutionaryTrace" id="P10082"/>
<dbReference type="GeneWiki" id="Peptide_YY"/>
<dbReference type="GenomeRNAi" id="5697"/>
<dbReference type="Pharos" id="P10082">
    <property type="development level" value="Tbio"/>
</dbReference>
<dbReference type="PRO" id="PR:P10082"/>
<dbReference type="Proteomes" id="UP000005640">
    <property type="component" value="Chromosome 17"/>
</dbReference>
<dbReference type="RNAct" id="P10082">
    <property type="molecule type" value="protein"/>
</dbReference>
<dbReference type="Bgee" id="ENSG00000131096">
    <property type="expression patterns" value="Expressed in mucosa of sigmoid colon and 92 other cell types or tissues"/>
</dbReference>
<dbReference type="GO" id="GO:0005576">
    <property type="term" value="C:extracellular region"/>
    <property type="evidence" value="ECO:0000304"/>
    <property type="project" value="Reactome"/>
</dbReference>
<dbReference type="GO" id="GO:0005615">
    <property type="term" value="C:extracellular space"/>
    <property type="evidence" value="ECO:0000318"/>
    <property type="project" value="GO_Central"/>
</dbReference>
<dbReference type="GO" id="GO:0001664">
    <property type="term" value="F:G protein-coupled receptor binding"/>
    <property type="evidence" value="ECO:0000353"/>
    <property type="project" value="GO_Central"/>
</dbReference>
<dbReference type="GO" id="GO:0005179">
    <property type="term" value="F:hormone activity"/>
    <property type="evidence" value="ECO:0000304"/>
    <property type="project" value="ProtInc"/>
</dbReference>
<dbReference type="GO" id="GO:0005184">
    <property type="term" value="F:neuropeptide hormone activity"/>
    <property type="evidence" value="ECO:0000318"/>
    <property type="project" value="GO_Central"/>
</dbReference>
<dbReference type="GO" id="GO:0031841">
    <property type="term" value="F:neuropeptide Y receptor binding"/>
    <property type="evidence" value="ECO:0000318"/>
    <property type="project" value="GO_Central"/>
</dbReference>
<dbReference type="GO" id="GO:0007631">
    <property type="term" value="P:feeding behavior"/>
    <property type="evidence" value="ECO:0000318"/>
    <property type="project" value="GO_Central"/>
</dbReference>
<dbReference type="GO" id="GO:0060575">
    <property type="term" value="P:intestinal epithelial cell differentiation"/>
    <property type="evidence" value="ECO:0000304"/>
    <property type="project" value="GO_Central"/>
</dbReference>
<dbReference type="GO" id="GO:0007218">
    <property type="term" value="P:neuropeptide signaling pathway"/>
    <property type="evidence" value="ECO:0000318"/>
    <property type="project" value="GO_Central"/>
</dbReference>
<dbReference type="CDD" id="cd00126">
    <property type="entry name" value="PAH"/>
    <property type="match status" value="1"/>
</dbReference>
<dbReference type="Gene3D" id="6.10.250.900">
    <property type="match status" value="1"/>
</dbReference>
<dbReference type="InterPro" id="IPR001955">
    <property type="entry name" value="Pancreatic_hormone-like"/>
</dbReference>
<dbReference type="InterPro" id="IPR020392">
    <property type="entry name" value="Pancreatic_hormone-like_CS"/>
</dbReference>
<dbReference type="PANTHER" id="PTHR10533">
    <property type="entry name" value="NEUROPEPTIDE Y/PANCREATIC HORMONE/PEPTIDE YY"/>
    <property type="match status" value="1"/>
</dbReference>
<dbReference type="PANTHER" id="PTHR10533:SF14">
    <property type="entry name" value="PEPTIDE YY-RELATED"/>
    <property type="match status" value="1"/>
</dbReference>
<dbReference type="Pfam" id="PF00159">
    <property type="entry name" value="Hormone_3"/>
    <property type="match status" value="1"/>
</dbReference>
<dbReference type="PRINTS" id="PR00278">
    <property type="entry name" value="PANCHORMONE"/>
</dbReference>
<dbReference type="SMART" id="SM00309">
    <property type="entry name" value="PAH"/>
    <property type="match status" value="1"/>
</dbReference>
<dbReference type="PROSITE" id="PS00265">
    <property type="entry name" value="PANCREATIC_HORMONE_1"/>
    <property type="match status" value="1"/>
</dbReference>
<dbReference type="PROSITE" id="PS50276">
    <property type="entry name" value="PANCREATIC_HORMONE_2"/>
    <property type="match status" value="1"/>
</dbReference>
<organism>
    <name type="scientific">Homo sapiens</name>
    <name type="common">Human</name>
    <dbReference type="NCBI Taxonomy" id="9606"/>
    <lineage>
        <taxon>Eukaryota</taxon>
        <taxon>Metazoa</taxon>
        <taxon>Chordata</taxon>
        <taxon>Craniata</taxon>
        <taxon>Vertebrata</taxon>
        <taxon>Euteleostomi</taxon>
        <taxon>Mammalia</taxon>
        <taxon>Eutheria</taxon>
        <taxon>Euarchontoglires</taxon>
        <taxon>Primates</taxon>
        <taxon>Haplorrhini</taxon>
        <taxon>Catarrhini</taxon>
        <taxon>Hominidae</taxon>
        <taxon>Homo</taxon>
    </lineage>
</organism>
<reference key="1">
    <citation type="journal article" date="1993" name="Biochim. Biophys. Acta">
        <title>Cloning and structural determination of human peptide YY cDNA and gene.</title>
        <authorList>
            <person name="Kohri K."/>
            <person name="Nata K."/>
            <person name="Yonekura H."/>
            <person name="Nagai A."/>
            <person name="Konno K."/>
            <person name="Okamoto H."/>
        </authorList>
    </citation>
    <scope>NUCLEOTIDE SEQUENCE [GENOMIC DNA / MRNA] (ISOFORMS 1 AND 2)</scope>
    <scope>VARIANTS GLY-37 AND ARG-72</scope>
    <source>
        <tissue>Colon mucosa</tissue>
    </source>
</reference>
<reference key="2">
    <citation type="submission" date="1993-11" db="EMBL/GenBank/DDBJ databases">
        <title>Genomic organisation and localisation of the gene for the human peptide YY.</title>
        <authorList>
            <person name="Herzog H."/>
        </authorList>
    </citation>
    <scope>NUCLEOTIDE SEQUENCE [GENOMIC DNA]</scope>
    <scope>VARIANT GLY-37</scope>
</reference>
<reference key="3">
    <citation type="submission" date="2004-06" db="EMBL/GenBank/DDBJ databases">
        <title>Cloning of human full open reading frames in Gateway(TM) system entry vector (pDONR201).</title>
        <authorList>
            <person name="Halleck A."/>
            <person name="Ebert L."/>
            <person name="Mkoundinya M."/>
            <person name="Schick M."/>
            <person name="Eisenstein S."/>
            <person name="Neubert P."/>
            <person name="Kstrang K."/>
            <person name="Schatten R."/>
            <person name="Shen B."/>
            <person name="Henze S."/>
            <person name="Mar W."/>
            <person name="Korn B."/>
            <person name="Zuo D."/>
            <person name="Hu Y."/>
            <person name="LaBaer J."/>
        </authorList>
    </citation>
    <scope>NUCLEOTIDE SEQUENCE [LARGE SCALE MRNA] (ISOFORM 2)</scope>
    <scope>VARIANTS GLY-37 AND ARG-72</scope>
</reference>
<reference key="4">
    <citation type="journal article" date="2006" name="Nature">
        <title>DNA sequence of human chromosome 17 and analysis of rearrangement in the human lineage.</title>
        <authorList>
            <person name="Zody M.C."/>
            <person name="Garber M."/>
            <person name="Adams D.J."/>
            <person name="Sharpe T."/>
            <person name="Harrow J."/>
            <person name="Lupski J.R."/>
            <person name="Nicholson C."/>
            <person name="Searle S.M."/>
            <person name="Wilming L."/>
            <person name="Young S.K."/>
            <person name="Abouelleil A."/>
            <person name="Allen N.R."/>
            <person name="Bi W."/>
            <person name="Bloom T."/>
            <person name="Borowsky M.L."/>
            <person name="Bugalter B.E."/>
            <person name="Butler J."/>
            <person name="Chang J.L."/>
            <person name="Chen C.-K."/>
            <person name="Cook A."/>
            <person name="Corum B."/>
            <person name="Cuomo C.A."/>
            <person name="de Jong P.J."/>
            <person name="DeCaprio D."/>
            <person name="Dewar K."/>
            <person name="FitzGerald M."/>
            <person name="Gilbert J."/>
            <person name="Gibson R."/>
            <person name="Gnerre S."/>
            <person name="Goldstein S."/>
            <person name="Grafham D.V."/>
            <person name="Grocock R."/>
            <person name="Hafez N."/>
            <person name="Hagopian D.S."/>
            <person name="Hart E."/>
            <person name="Norman C.H."/>
            <person name="Humphray S."/>
            <person name="Jaffe D.B."/>
            <person name="Jones M."/>
            <person name="Kamal M."/>
            <person name="Khodiyar V.K."/>
            <person name="LaButti K."/>
            <person name="Laird G."/>
            <person name="Lehoczky J."/>
            <person name="Liu X."/>
            <person name="Lokyitsang T."/>
            <person name="Loveland J."/>
            <person name="Lui A."/>
            <person name="Macdonald P."/>
            <person name="Major J.E."/>
            <person name="Matthews L."/>
            <person name="Mauceli E."/>
            <person name="McCarroll S.A."/>
            <person name="Mihalev A.H."/>
            <person name="Mudge J."/>
            <person name="Nguyen C."/>
            <person name="Nicol R."/>
            <person name="O'Leary S.B."/>
            <person name="Osoegawa K."/>
            <person name="Schwartz D.C."/>
            <person name="Shaw-Smith C."/>
            <person name="Stankiewicz P."/>
            <person name="Steward C."/>
            <person name="Swarbreck D."/>
            <person name="Venkataraman V."/>
            <person name="Whittaker C.A."/>
            <person name="Yang X."/>
            <person name="Zimmer A.R."/>
            <person name="Bradley A."/>
            <person name="Hubbard T."/>
            <person name="Birren B.W."/>
            <person name="Rogers J."/>
            <person name="Lander E.S."/>
            <person name="Nusbaum C."/>
        </authorList>
    </citation>
    <scope>NUCLEOTIDE SEQUENCE [LARGE SCALE GENOMIC DNA]</scope>
</reference>
<reference key="5">
    <citation type="journal article" date="2004" name="Genome Res.">
        <title>The status, quality, and expansion of the NIH full-length cDNA project: the Mammalian Gene Collection (MGC).</title>
        <authorList>
            <consortium name="The MGC Project Team"/>
        </authorList>
    </citation>
    <scope>NUCLEOTIDE SEQUENCE [LARGE SCALE MRNA] (ISOFORM 1)</scope>
    <scope>VARIANTS GLY-37 AND ARG-72</scope>
    <source>
        <tissue>Brain</tissue>
    </source>
</reference>
<reference key="6">
    <citation type="journal article" date="1988" name="Biochem. Biophys. Res. Commun.">
        <title>Isolation and primary structure of human peptide YY.</title>
        <authorList>
            <person name="Tatemoto K."/>
            <person name="Nakano I."/>
            <person name="Makk G."/>
            <person name="Angwin P."/>
            <person name="Mann M."/>
            <person name="Schilling J."/>
            <person name="Go V.L.W."/>
        </authorList>
    </citation>
    <scope>PROTEIN SEQUENCE OF 29-64</scope>
    <scope>AMIDATION AT TYR-64</scope>
    <scope>SYNTHESIS OF 29-64</scope>
    <scope>VARIANT GLY-37</scope>
</reference>
<reference key="7">
    <citation type="journal article" date="1989" name="Peptides">
        <title>A new molecular form of PYY: structural characterization of human PYY(3-36) and PYY(1-36).</title>
        <authorList>
            <person name="Eberlein G.A."/>
            <person name="Eysselein V.E."/>
            <person name="Schaeffer M."/>
            <person name="Layer P."/>
            <person name="Grandt D."/>
            <person name="Goebell H."/>
            <person name="Niebel W."/>
            <person name="Davis M."/>
            <person name="Lee T.D."/>
            <person name="Shively J.E."/>
            <person name="Reeve J.R. Jr."/>
        </authorList>
    </citation>
    <scope>PROTEIN SEQUENCE OF 29-64</scope>
    <scope>AMIDATION AT TYR-64</scope>
    <scope>VARIANT GLY-37</scope>
</reference>
<reference key="8">
    <citation type="journal article" date="2011" name="FEBS J.">
        <title>Neuropeptide Y, B-type natriuretic peptide, substance P and peptide YY are novel substrates of fibroblast activation protein-alpha.</title>
        <authorList>
            <person name="Keane F.M."/>
            <person name="Nadvi N.A."/>
            <person name="Yao T.W."/>
            <person name="Gorrell M.D."/>
        </authorList>
    </citation>
    <scope>CLEAVAGE BY FAP</scope>
    <scope>CLEAVAGE SITE</scope>
</reference>
<reference key="9">
    <citation type="journal article" date="2006" name="Biochemistry">
        <title>The PP-fold solution structure of human polypeptide YY and human PYY3-36 as determined by NMR.</title>
        <authorList>
            <person name="Nygaard R."/>
            <person name="Nielbo S."/>
            <person name="Schwartz T.W."/>
            <person name="Poulsen F.M."/>
        </authorList>
    </citation>
    <scope>STRUCTURE BY NMR OF 29-64</scope>
</reference>
<proteinExistence type="evidence at protein level"/>
<keyword id="KW-0002">3D-structure</keyword>
<keyword id="KW-0025">Alternative splicing</keyword>
<keyword id="KW-0027">Amidation</keyword>
<keyword id="KW-0165">Cleavage on pair of basic residues</keyword>
<keyword id="KW-0903">Direct protein sequencing</keyword>
<keyword id="KW-0372">Hormone</keyword>
<keyword id="KW-0597">Phosphoprotein</keyword>
<keyword id="KW-1267">Proteomics identification</keyword>
<keyword id="KW-1185">Reference proteome</keyword>
<keyword id="KW-0964">Secreted</keyword>
<keyword id="KW-0732">Signal</keyword>
<comment type="function">
    <text>This gut peptide inhibits exocrine pancreatic secretion, has a vasoconstrictory action and inhibitis jejunal and colonic mobility.</text>
</comment>
<comment type="interaction">
    <interactant intactId="EBI-6655667">
        <id>P10082</id>
    </interactant>
    <interactant intactId="EBI-372227">
        <id>P25929</id>
        <label>NPY1R</label>
    </interactant>
    <organismsDiffer>false</organismsDiffer>
    <experiments>2</experiments>
</comment>
<comment type="interaction">
    <interactant intactId="EBI-6655667">
        <id>P10082</id>
    </interactant>
    <interactant intactId="EBI-6655721">
        <id>P49146</id>
        <label>NPY2R</label>
    </interactant>
    <organismsDiffer>false</organismsDiffer>
    <experiments>2</experiments>
</comment>
<comment type="subcellular location">
    <subcellularLocation>
        <location>Secreted</location>
    </subcellularLocation>
</comment>
<comment type="alternative products">
    <event type="alternative splicing"/>
    <isoform>
        <id>P10082-1</id>
        <name>1</name>
        <name>Long</name>
        <sequence type="displayed"/>
    </isoform>
    <isoform>
        <id>P10082-2</id>
        <name>2</name>
        <name>Short</name>
        <sequence type="described" ref="VSP_005081"/>
    </isoform>
</comment>
<comment type="PTM">
    <text evidence="5">The peptide YY form is cleaved at Pro-30 by the prolyl endopeptidase FAP (seprase) activity (in vitro) to generate peptide YY(3-36).</text>
</comment>
<comment type="similarity">
    <text evidence="14">Belongs to the NPY family.</text>
</comment>
<comment type="online information" name="Atlas of Genetics and Cytogenetics in Oncology and Haematology">
    <link uri="https://atlasgeneticsoncology.org/gene/46182/PYY"/>
</comment>
<name>PYY_HUMAN</name>
<sequence>MVFVRRPWPALTTVLLALLVCLGALVDAYPIKPEAPREDASPEELNRYYASLRHYLNLVTRQRYGKRDGPDTLLSKTFFPDGEDRPVRSRSEGPDLW</sequence>